<accession>P08882</accession>
<accession>Q61389</accession>
<gene>
    <name type="primary">Gzmc</name>
    <name type="synonym">Ctla-5</name>
    <name type="synonym">Ctla5</name>
</gene>
<keyword id="KW-0002">3D-structure</keyword>
<keyword id="KW-0204">Cytolysis</keyword>
<keyword id="KW-0903">Direct protein sequencing</keyword>
<keyword id="KW-1015">Disulfide bond</keyword>
<keyword id="KW-0378">Hydrolase</keyword>
<keyword id="KW-0458">Lysosome</keyword>
<keyword id="KW-0645">Protease</keyword>
<keyword id="KW-1185">Reference proteome</keyword>
<keyword id="KW-0720">Serine protease</keyword>
<keyword id="KW-0732">Signal</keyword>
<keyword id="KW-0865">Zymogen</keyword>
<evidence type="ECO:0000250" key="1"/>
<evidence type="ECO:0000255" key="2">
    <source>
        <dbReference type="PROSITE-ProRule" id="PRU00274"/>
    </source>
</evidence>
<evidence type="ECO:0000269" key="3">
    <source>
    </source>
</evidence>
<evidence type="ECO:0000305" key="4"/>
<evidence type="ECO:0007829" key="5">
    <source>
        <dbReference type="PDB" id="3FZZ"/>
    </source>
</evidence>
<evidence type="ECO:0007829" key="6">
    <source>
        <dbReference type="PDB" id="3G01"/>
    </source>
</evidence>
<comment type="function">
    <text>This enzyme is probably necessary for target cell lysis in cell-mediated immune responses.</text>
</comment>
<comment type="subcellular location">
    <subcellularLocation>
        <location>Cytolytic granule</location>
    </subcellularLocation>
</comment>
<comment type="similarity">
    <text evidence="2">Belongs to the peptidase S1 family. Granzyme subfamily.</text>
</comment>
<sequence>MPPVLILLTLLLPLRAGAEEIIGGNEISPHSRPYMAYYEFLKVGGKKMFCGGFLVRDKFVLTAAHCKGSSMTVTLGAHNIKAKEETQQIIPVAKAIPHPDYNPDDRSNDIMLLKLVRNAKRTRAVRPLNLPRRNAHVKPGDECYVAGWGKVTPDGEFPKTLHEVKLTVQKDQVCESQFQSSYNRANEICVGDSKIKGASFEEDSGGPLVCKRAAAGIVSYGQTDGSAPQVFTRVLSFVSWIKKTMKHS</sequence>
<organism>
    <name type="scientific">Mus musculus</name>
    <name type="common">Mouse</name>
    <dbReference type="NCBI Taxonomy" id="10090"/>
    <lineage>
        <taxon>Eukaryota</taxon>
        <taxon>Metazoa</taxon>
        <taxon>Chordata</taxon>
        <taxon>Craniata</taxon>
        <taxon>Vertebrata</taxon>
        <taxon>Euteleostomi</taxon>
        <taxon>Mammalia</taxon>
        <taxon>Eutheria</taxon>
        <taxon>Euarchontoglires</taxon>
        <taxon>Glires</taxon>
        <taxon>Rodentia</taxon>
        <taxon>Myomorpha</taxon>
        <taxon>Muroidea</taxon>
        <taxon>Muridae</taxon>
        <taxon>Murinae</taxon>
        <taxon>Mus</taxon>
        <taxon>Mus</taxon>
    </lineage>
</organism>
<dbReference type="EC" id="3.4.21.-"/>
<dbReference type="EMBL" id="M22527">
    <property type="protein sequence ID" value="AAA85454.1"/>
    <property type="molecule type" value="Genomic_DNA"/>
</dbReference>
<dbReference type="EMBL" id="X12822">
    <property type="protein sequence ID" value="CAA31309.1"/>
    <property type="molecule type" value="mRNA"/>
</dbReference>
<dbReference type="EMBL" id="M18459">
    <property type="protein sequence ID" value="AAA37734.1"/>
    <property type="molecule type" value="mRNA"/>
</dbReference>
<dbReference type="EMBL" id="M12301">
    <property type="protein sequence ID" value="AAA37384.1"/>
    <property type="molecule type" value="mRNA"/>
</dbReference>
<dbReference type="CCDS" id="CCDS27146.1"/>
<dbReference type="PIR" id="B28952">
    <property type="entry name" value="PRMSC2"/>
</dbReference>
<dbReference type="RefSeq" id="NP_001409139.1">
    <property type="nucleotide sequence ID" value="NM_001422210.1"/>
</dbReference>
<dbReference type="RefSeq" id="NP_034501.2">
    <property type="nucleotide sequence ID" value="NM_010371.4"/>
</dbReference>
<dbReference type="RefSeq" id="XP_011243265.1">
    <property type="nucleotide sequence ID" value="XM_011244963.4"/>
</dbReference>
<dbReference type="PDB" id="3FZZ">
    <property type="method" value="X-ray"/>
    <property type="resolution" value="2.50 A"/>
    <property type="chains" value="A/B=21-247"/>
</dbReference>
<dbReference type="PDB" id="3G01">
    <property type="method" value="X-ray"/>
    <property type="resolution" value="2.50 A"/>
    <property type="chains" value="A/B=21-247"/>
</dbReference>
<dbReference type="PDBsum" id="3FZZ"/>
<dbReference type="PDBsum" id="3G01"/>
<dbReference type="SMR" id="P08882"/>
<dbReference type="FunCoup" id="P08882">
    <property type="interactions" value="605"/>
</dbReference>
<dbReference type="STRING" id="10090.ENSMUSP00000015585"/>
<dbReference type="MEROPS" id="S01.137"/>
<dbReference type="iPTMnet" id="P08882"/>
<dbReference type="PhosphoSitePlus" id="P08882"/>
<dbReference type="PaxDb" id="10090-ENSMUSP00000015585"/>
<dbReference type="PeptideAtlas" id="P08882"/>
<dbReference type="ProteomicsDB" id="271287"/>
<dbReference type="DNASU" id="14940"/>
<dbReference type="Ensembl" id="ENSMUST00000015585.4">
    <property type="protein sequence ID" value="ENSMUSP00000015585.3"/>
    <property type="gene ID" value="ENSMUSG00000079186.4"/>
</dbReference>
<dbReference type="GeneID" id="14940"/>
<dbReference type="KEGG" id="mmu:14940"/>
<dbReference type="UCSC" id="uc007ubu.2">
    <property type="organism name" value="mouse"/>
</dbReference>
<dbReference type="AGR" id="MGI:109256"/>
<dbReference type="CTD" id="14940"/>
<dbReference type="MGI" id="MGI:109256">
    <property type="gene designation" value="Gzmc"/>
</dbReference>
<dbReference type="VEuPathDB" id="HostDB:ENSMUSG00000079186"/>
<dbReference type="eggNOG" id="KOG3627">
    <property type="taxonomic scope" value="Eukaryota"/>
</dbReference>
<dbReference type="GeneTree" id="ENSGT01030000234551"/>
<dbReference type="HOGENOM" id="CLU_006842_1_0_1"/>
<dbReference type="InParanoid" id="P08882"/>
<dbReference type="OMA" id="EAVWPLN"/>
<dbReference type="OrthoDB" id="5565075at2759"/>
<dbReference type="PhylomeDB" id="P08882"/>
<dbReference type="TreeFam" id="TF333630"/>
<dbReference type="BioGRID-ORCS" id="14940">
    <property type="hits" value="1 hit in 78 CRISPR screens"/>
</dbReference>
<dbReference type="ChiTaRS" id="Gzmc">
    <property type="organism name" value="mouse"/>
</dbReference>
<dbReference type="EvolutionaryTrace" id="P08882"/>
<dbReference type="PRO" id="PR:P08882"/>
<dbReference type="Proteomes" id="UP000000589">
    <property type="component" value="Chromosome 14"/>
</dbReference>
<dbReference type="RNAct" id="P08882">
    <property type="molecule type" value="protein"/>
</dbReference>
<dbReference type="Bgee" id="ENSMUSG00000079186">
    <property type="expression patterns" value="Expressed in gastrula and 46 other cell types or tissues"/>
</dbReference>
<dbReference type="ExpressionAtlas" id="P08882">
    <property type="expression patterns" value="baseline and differential"/>
</dbReference>
<dbReference type="GO" id="GO:0044194">
    <property type="term" value="C:cytolytic granule"/>
    <property type="evidence" value="ECO:0007669"/>
    <property type="project" value="UniProtKB-SubCell"/>
</dbReference>
<dbReference type="GO" id="GO:0004252">
    <property type="term" value="F:serine-type endopeptidase activity"/>
    <property type="evidence" value="ECO:0007669"/>
    <property type="project" value="InterPro"/>
</dbReference>
<dbReference type="GO" id="GO:0031640">
    <property type="term" value="P:killing of cells of another organism"/>
    <property type="evidence" value="ECO:0007669"/>
    <property type="project" value="UniProtKB-KW"/>
</dbReference>
<dbReference type="GO" id="GO:0006508">
    <property type="term" value="P:proteolysis"/>
    <property type="evidence" value="ECO:0007669"/>
    <property type="project" value="UniProtKB-KW"/>
</dbReference>
<dbReference type="CDD" id="cd00190">
    <property type="entry name" value="Tryp_SPc"/>
    <property type="match status" value="1"/>
</dbReference>
<dbReference type="FunFam" id="2.40.10.10:FF:000014">
    <property type="entry name" value="Complement factor D"/>
    <property type="match status" value="1"/>
</dbReference>
<dbReference type="Gene3D" id="2.40.10.10">
    <property type="entry name" value="Trypsin-like serine proteases"/>
    <property type="match status" value="2"/>
</dbReference>
<dbReference type="InterPro" id="IPR009003">
    <property type="entry name" value="Peptidase_S1_PA"/>
</dbReference>
<dbReference type="InterPro" id="IPR043504">
    <property type="entry name" value="Peptidase_S1_PA_chymotrypsin"/>
</dbReference>
<dbReference type="InterPro" id="IPR001314">
    <property type="entry name" value="Peptidase_S1A"/>
</dbReference>
<dbReference type="InterPro" id="IPR001254">
    <property type="entry name" value="Trypsin_dom"/>
</dbReference>
<dbReference type="InterPro" id="IPR018114">
    <property type="entry name" value="TRYPSIN_HIS"/>
</dbReference>
<dbReference type="PANTHER" id="PTHR24271:SF43">
    <property type="entry name" value="GRANZYME C"/>
    <property type="match status" value="1"/>
</dbReference>
<dbReference type="PANTHER" id="PTHR24271">
    <property type="entry name" value="KALLIKREIN-RELATED"/>
    <property type="match status" value="1"/>
</dbReference>
<dbReference type="Pfam" id="PF00089">
    <property type="entry name" value="Trypsin"/>
    <property type="match status" value="1"/>
</dbReference>
<dbReference type="PRINTS" id="PR00722">
    <property type="entry name" value="CHYMOTRYPSIN"/>
</dbReference>
<dbReference type="SMART" id="SM00020">
    <property type="entry name" value="Tryp_SPc"/>
    <property type="match status" value="1"/>
</dbReference>
<dbReference type="SUPFAM" id="SSF50494">
    <property type="entry name" value="Trypsin-like serine proteases"/>
    <property type="match status" value="1"/>
</dbReference>
<dbReference type="PROSITE" id="PS50240">
    <property type="entry name" value="TRYPSIN_DOM"/>
    <property type="match status" value="1"/>
</dbReference>
<dbReference type="PROSITE" id="PS00134">
    <property type="entry name" value="TRYPSIN_HIS"/>
    <property type="match status" value="1"/>
</dbReference>
<feature type="signal peptide">
    <location>
        <begin position="1"/>
        <end position="18"/>
    </location>
</feature>
<feature type="propeptide" id="PRO_0000027403" evidence="3">
    <location>
        <begin position="19"/>
        <end position="20"/>
    </location>
</feature>
<feature type="chain" id="PRO_0000027404" description="Granzyme C">
    <location>
        <begin position="21"/>
        <end position="248"/>
    </location>
</feature>
<feature type="domain" description="Peptidase S1" evidence="2">
    <location>
        <begin position="21"/>
        <end position="246"/>
    </location>
</feature>
<feature type="active site" description="Charge relay system" evidence="1">
    <location>
        <position position="65"/>
    </location>
</feature>
<feature type="active site" description="Charge relay system" evidence="1">
    <location>
        <position position="109"/>
    </location>
</feature>
<feature type="active site" description="Charge relay system" evidence="1">
    <location>
        <position position="204"/>
    </location>
</feature>
<feature type="disulfide bond" evidence="2">
    <location>
        <begin position="50"/>
        <end position="66"/>
    </location>
</feature>
<feature type="disulfide bond" evidence="2">
    <location>
        <begin position="143"/>
        <end position="210"/>
    </location>
</feature>
<feature type="disulfide bond" evidence="2">
    <location>
        <begin position="174"/>
        <end position="189"/>
    </location>
</feature>
<feature type="sequence conflict" description="In Ref. 3; AAA37734." evidence="4" ref="3">
    <original>S</original>
    <variation>R</variation>
    <location>
        <position position="69"/>
    </location>
</feature>
<feature type="sequence conflict" description="In Ref. 4; AAA37384." evidence="4" ref="4">
    <original>S</original>
    <variation>F</variation>
    <location>
        <position position="181"/>
    </location>
</feature>
<feature type="strand" evidence="5">
    <location>
        <begin position="35"/>
        <end position="41"/>
    </location>
</feature>
<feature type="strand" evidence="5">
    <location>
        <begin position="43"/>
        <end position="45"/>
    </location>
</feature>
<feature type="strand" evidence="5">
    <location>
        <begin position="47"/>
        <end position="56"/>
    </location>
</feature>
<feature type="strand" evidence="5">
    <location>
        <begin position="59"/>
        <end position="62"/>
    </location>
</feature>
<feature type="strand" evidence="5">
    <location>
        <begin position="69"/>
        <end position="76"/>
    </location>
</feature>
<feature type="strand" evidence="5">
    <location>
        <begin position="88"/>
        <end position="97"/>
    </location>
</feature>
<feature type="turn" evidence="5">
    <location>
        <begin position="103"/>
        <end position="106"/>
    </location>
</feature>
<feature type="strand" evidence="5">
    <location>
        <begin position="111"/>
        <end position="117"/>
    </location>
</feature>
<feature type="strand" evidence="5">
    <location>
        <begin position="142"/>
        <end position="149"/>
    </location>
</feature>
<feature type="strand" evidence="5">
    <location>
        <begin position="162"/>
        <end position="168"/>
    </location>
</feature>
<feature type="helix" evidence="5">
    <location>
        <begin position="171"/>
        <end position="178"/>
    </location>
</feature>
<feature type="turn" evidence="5">
    <location>
        <begin position="179"/>
        <end position="181"/>
    </location>
</feature>
<feature type="turn" evidence="5">
    <location>
        <begin position="184"/>
        <end position="186"/>
    </location>
</feature>
<feature type="strand" evidence="5">
    <location>
        <begin position="187"/>
        <end position="190"/>
    </location>
</feature>
<feature type="turn" evidence="5">
    <location>
        <begin position="200"/>
        <end position="205"/>
    </location>
</feature>
<feature type="strand" evidence="5">
    <location>
        <begin position="207"/>
        <end position="210"/>
    </location>
</feature>
<feature type="strand" evidence="5">
    <location>
        <begin position="213"/>
        <end position="220"/>
    </location>
</feature>
<feature type="strand" evidence="6">
    <location>
        <begin position="223"/>
        <end position="225"/>
    </location>
</feature>
<feature type="strand" evidence="5">
    <location>
        <begin position="226"/>
        <end position="233"/>
    </location>
</feature>
<feature type="helix" evidence="5">
    <location>
        <begin position="234"/>
        <end position="236"/>
    </location>
</feature>
<feature type="helix" evidence="5">
    <location>
        <begin position="238"/>
        <end position="245"/>
    </location>
</feature>
<protein>
    <recommendedName>
        <fullName>Granzyme C</fullName>
        <ecNumber>3.4.21.-</ecNumber>
    </recommendedName>
    <alternativeName>
        <fullName>B10</fullName>
    </alternativeName>
    <alternativeName>
        <fullName>Cytotoxic cell protease 2</fullName>
        <shortName>CCP2</shortName>
    </alternativeName>
</protein>
<reference key="1">
    <citation type="journal article" date="1988" name="FEBS Lett.">
        <title>Isolation of two cDNA sequences which encode cytotoxic cell proteases.</title>
        <authorList>
            <person name="Bleackley R.C."/>
            <person name="Duggan B."/>
            <person name="Ehrman N."/>
            <person name="Lobe C.G."/>
        </authorList>
    </citation>
    <scope>NUCLEOTIDE SEQUENCE [MRNA]</scope>
</reference>
<reference key="2">
    <citation type="journal article" date="1988" name="Biochemistry">
        <title>Organization of two genes encoding cytotoxic T lymphocyte-specific serine proteases CCPI and CCPII.</title>
        <authorList>
            <person name="Lobe C.G."/>
            <person name="Upton C."/>
            <person name="Duggan B."/>
            <person name="Ehrman N."/>
            <person name="Letellier M."/>
            <person name="Bell J."/>
            <person name="McFadden G."/>
            <person name="Bleackley R.C."/>
        </authorList>
    </citation>
    <scope>NUCLEOTIDE SEQUENCE [GENOMIC DNA]</scope>
</reference>
<reference key="3">
    <citation type="journal article" date="1988" name="J. Immunol.">
        <title>cDNA cloning of granzyme C, a granule-associated serine protease of cytolytic T lymphocytes.</title>
        <authorList>
            <person name="Jenne D.E."/>
            <person name="Rey C."/>
            <person name="Masson D."/>
            <person name="Stanley K.K."/>
            <person name="Herz J."/>
            <person name="Plaetinck G."/>
            <person name="Tschopp J."/>
        </authorList>
    </citation>
    <scope>NUCLEOTIDE SEQUENCE [MRNA]</scope>
</reference>
<reference key="4">
    <citation type="journal article" date="1986" name="Science">
        <title>Novel serine proteases encoded by two cytotoxic T lymphocyte-specific genes.</title>
        <authorList>
            <person name="Lobe C.G."/>
            <person name="Finlay B.B."/>
            <person name="Paranchych W."/>
            <person name="Paetkau V.H."/>
            <person name="Bleackley R.C."/>
        </authorList>
    </citation>
    <scope>NUCLEOTIDE SEQUENCE [MRNA] OF 159-248</scope>
</reference>
<reference key="5">
    <citation type="journal article" date="1987" name="Cell">
        <title>A family of serine esterases in lytic granules of cytolytic T lymphocytes.</title>
        <authorList>
            <person name="Masson D."/>
            <person name="Tschopp J."/>
        </authorList>
    </citation>
    <scope>PROTEIN SEQUENCE OF 21-40</scope>
</reference>
<name>GRAC_MOUSE</name>
<proteinExistence type="evidence at protein level"/>